<name>ARGR_FINM2</name>
<evidence type="ECO:0000255" key="1">
    <source>
        <dbReference type="HAMAP-Rule" id="MF_00173"/>
    </source>
</evidence>
<comment type="function">
    <text evidence="1">Regulates arginine biosynthesis genes.</text>
</comment>
<comment type="pathway">
    <text>Amino-acid biosynthesis; L-arginine biosynthesis [regulation].</text>
</comment>
<comment type="subcellular location">
    <subcellularLocation>
        <location evidence="1">Cytoplasm</location>
    </subcellularLocation>
</comment>
<comment type="similarity">
    <text evidence="1">Belongs to the ArgR family.</text>
</comment>
<keyword id="KW-0028">Amino-acid biosynthesis</keyword>
<keyword id="KW-0055">Arginine biosynthesis</keyword>
<keyword id="KW-0963">Cytoplasm</keyword>
<keyword id="KW-0238">DNA-binding</keyword>
<keyword id="KW-1185">Reference proteome</keyword>
<keyword id="KW-0678">Repressor</keyword>
<keyword id="KW-0804">Transcription</keyword>
<keyword id="KW-0805">Transcription regulation</keyword>
<feature type="chain" id="PRO_1000097873" description="Arginine repressor">
    <location>
        <begin position="1"/>
        <end position="150"/>
    </location>
</feature>
<dbReference type="EMBL" id="AP008971">
    <property type="protein sequence ID" value="BAG08256.1"/>
    <property type="molecule type" value="Genomic_DNA"/>
</dbReference>
<dbReference type="RefSeq" id="WP_002836519.1">
    <property type="nucleotide sequence ID" value="NC_010376.1"/>
</dbReference>
<dbReference type="SMR" id="B0S1L6"/>
<dbReference type="STRING" id="334413.FMG_0838"/>
<dbReference type="GeneID" id="60840243"/>
<dbReference type="KEGG" id="fma:FMG_0838"/>
<dbReference type="eggNOG" id="COG1438">
    <property type="taxonomic scope" value="Bacteria"/>
</dbReference>
<dbReference type="HOGENOM" id="CLU_097103_3_0_9"/>
<dbReference type="UniPathway" id="UPA00068"/>
<dbReference type="Proteomes" id="UP000001319">
    <property type="component" value="Chromosome"/>
</dbReference>
<dbReference type="GO" id="GO:0005737">
    <property type="term" value="C:cytoplasm"/>
    <property type="evidence" value="ECO:0007669"/>
    <property type="project" value="UniProtKB-SubCell"/>
</dbReference>
<dbReference type="GO" id="GO:0034618">
    <property type="term" value="F:arginine binding"/>
    <property type="evidence" value="ECO:0007669"/>
    <property type="project" value="InterPro"/>
</dbReference>
<dbReference type="GO" id="GO:0003677">
    <property type="term" value="F:DNA binding"/>
    <property type="evidence" value="ECO:0007669"/>
    <property type="project" value="UniProtKB-KW"/>
</dbReference>
<dbReference type="GO" id="GO:0003700">
    <property type="term" value="F:DNA-binding transcription factor activity"/>
    <property type="evidence" value="ECO:0007669"/>
    <property type="project" value="UniProtKB-UniRule"/>
</dbReference>
<dbReference type="GO" id="GO:0006526">
    <property type="term" value="P:L-arginine biosynthetic process"/>
    <property type="evidence" value="ECO:0007669"/>
    <property type="project" value="UniProtKB-UniPathway"/>
</dbReference>
<dbReference type="GO" id="GO:0051259">
    <property type="term" value="P:protein complex oligomerization"/>
    <property type="evidence" value="ECO:0007669"/>
    <property type="project" value="InterPro"/>
</dbReference>
<dbReference type="GO" id="GO:1900079">
    <property type="term" value="P:regulation of arginine biosynthetic process"/>
    <property type="evidence" value="ECO:0007669"/>
    <property type="project" value="UniProtKB-UniRule"/>
</dbReference>
<dbReference type="Gene3D" id="3.30.1360.40">
    <property type="match status" value="1"/>
</dbReference>
<dbReference type="Gene3D" id="1.10.10.10">
    <property type="entry name" value="Winged helix-like DNA-binding domain superfamily/Winged helix DNA-binding domain"/>
    <property type="match status" value="1"/>
</dbReference>
<dbReference type="HAMAP" id="MF_00173">
    <property type="entry name" value="Arg_repressor"/>
    <property type="match status" value="1"/>
</dbReference>
<dbReference type="InterPro" id="IPR001669">
    <property type="entry name" value="Arg_repress"/>
</dbReference>
<dbReference type="InterPro" id="IPR020899">
    <property type="entry name" value="Arg_repress_C"/>
</dbReference>
<dbReference type="InterPro" id="IPR036251">
    <property type="entry name" value="Arg_repress_C_sf"/>
</dbReference>
<dbReference type="InterPro" id="IPR020900">
    <property type="entry name" value="Arg_repress_DNA-bd"/>
</dbReference>
<dbReference type="InterPro" id="IPR036388">
    <property type="entry name" value="WH-like_DNA-bd_sf"/>
</dbReference>
<dbReference type="InterPro" id="IPR036390">
    <property type="entry name" value="WH_DNA-bd_sf"/>
</dbReference>
<dbReference type="PANTHER" id="PTHR34471">
    <property type="entry name" value="ARGININE REPRESSOR"/>
    <property type="match status" value="1"/>
</dbReference>
<dbReference type="PANTHER" id="PTHR34471:SF1">
    <property type="entry name" value="ARGININE REPRESSOR"/>
    <property type="match status" value="1"/>
</dbReference>
<dbReference type="Pfam" id="PF01316">
    <property type="entry name" value="Arg_repressor"/>
    <property type="match status" value="1"/>
</dbReference>
<dbReference type="Pfam" id="PF02863">
    <property type="entry name" value="Arg_repressor_C"/>
    <property type="match status" value="1"/>
</dbReference>
<dbReference type="PRINTS" id="PR01467">
    <property type="entry name" value="ARGREPRESSOR"/>
</dbReference>
<dbReference type="SUPFAM" id="SSF55252">
    <property type="entry name" value="C-terminal domain of arginine repressor"/>
    <property type="match status" value="1"/>
</dbReference>
<dbReference type="SUPFAM" id="SSF46785">
    <property type="entry name" value="Winged helix' DNA-binding domain"/>
    <property type="match status" value="1"/>
</dbReference>
<proteinExistence type="inferred from homology"/>
<organism>
    <name type="scientific">Finegoldia magna (strain ATCC 29328 / DSM 20472 / WAL 2508)</name>
    <name type="common">Peptostreptococcus magnus</name>
    <dbReference type="NCBI Taxonomy" id="334413"/>
    <lineage>
        <taxon>Bacteria</taxon>
        <taxon>Bacillati</taxon>
        <taxon>Bacillota</taxon>
        <taxon>Tissierellia</taxon>
        <taxon>Tissierellales</taxon>
        <taxon>Peptoniphilaceae</taxon>
        <taxon>Finegoldia</taxon>
    </lineage>
</organism>
<protein>
    <recommendedName>
        <fullName evidence="1">Arginine repressor</fullName>
    </recommendedName>
</protein>
<gene>
    <name evidence="1" type="primary">argR</name>
    <name type="ordered locus">FMG_0838</name>
</gene>
<reference key="1">
    <citation type="journal article" date="2008" name="DNA Res.">
        <title>Complete genome sequence of Finegoldia magna, an anaerobic opportunistic pathogen.</title>
        <authorList>
            <person name="Goto T."/>
            <person name="Yamashita A."/>
            <person name="Hirakawa H."/>
            <person name="Matsutani M."/>
            <person name="Todo K."/>
            <person name="Ohshima K."/>
            <person name="Toh H."/>
            <person name="Miyamoto K."/>
            <person name="Kuhara S."/>
            <person name="Hattori M."/>
            <person name="Shimizu T."/>
            <person name="Akimoto S."/>
        </authorList>
    </citation>
    <scope>NUCLEOTIDE SEQUENCE [LARGE SCALE GENOMIC DNA]</scope>
    <source>
        <strain>ATCC 29328 / DSM 20472 / WAL 2508</strain>
    </source>
</reference>
<sequence>MKKYTRQRLILDLIEENEIRTQEELSDYLEAHGVRATQATISRDIKELRISKVQTREGEYHYAIIDTVHDSLNERLDKIFRSAVLTIKHNEDMVIIKTISHTATVCGMAITNAKLDNIAGILTGNDTIYITVEDKSGLEKLVSEIKSIIR</sequence>
<accession>B0S1L6</accession>